<keyword id="KW-0963">Cytoplasm</keyword>
<keyword id="KW-0479">Metal-binding</keyword>
<keyword id="KW-1185">Reference proteome</keyword>
<keyword id="KW-0862">Zinc</keyword>
<keyword id="KW-0863">Zinc-finger</keyword>
<gene>
    <name type="primary">MIF3</name>
    <name type="ordered locus">LOC_Os09g24810</name>
    <name type="ordered locus">Os09g0414500</name>
    <name type="ORF">OsJ_29354</name>
    <name type="ORF">P0707C02.4</name>
</gene>
<proteinExistence type="inferred from homology"/>
<sequence>MMKRLVVLRRREPAVRFSCCGVRYGECRRNHAASTGGHAVDGCREFIAAEDGGGGNSTSAVGVAAAALKCAACGCHRSFHRRVQVYEVAWDDDCASGDTSSSSPSSSSSLSSE</sequence>
<protein>
    <recommendedName>
        <fullName>Mini zinc finger protein 2</fullName>
        <shortName>OsMIF2</shortName>
    </recommendedName>
</protein>
<comment type="function">
    <text evidence="1">Inhibits zinc finger homeodomain (ZHD) transcription factors, by interacting with them to prevent both their nuclear localization and their DNA-binding properties.</text>
</comment>
<comment type="subunit">
    <text evidence="1">Homo- and heterodimers.</text>
</comment>
<comment type="subcellular location">
    <subcellularLocation>
        <location evidence="1">Cytoplasm</location>
    </subcellularLocation>
</comment>
<feature type="chain" id="PRO_0000426032" description="Mini zinc finger protein 2">
    <location>
        <begin position="1"/>
        <end position="113"/>
    </location>
</feature>
<feature type="zinc finger region" description="ZF-HD dimerization-type; degenerate" evidence="2">
    <location>
        <begin position="24"/>
        <end position="83"/>
    </location>
</feature>
<feature type="region of interest" description="Disordered" evidence="3">
    <location>
        <begin position="93"/>
        <end position="113"/>
    </location>
</feature>
<feature type="compositionally biased region" description="Low complexity" evidence="3">
    <location>
        <begin position="100"/>
        <end position="113"/>
    </location>
</feature>
<feature type="sequence conflict" description="In Ref. 4; EAZ44723." evidence="4" ref="4">
    <original>S</original>
    <variation>L</variation>
    <location>
        <position position="103"/>
    </location>
</feature>
<dbReference type="EMBL" id="AP005636">
    <property type="protein sequence ID" value="BAD28898.1"/>
    <property type="molecule type" value="Genomic_DNA"/>
</dbReference>
<dbReference type="EMBL" id="AP008215">
    <property type="protein sequence ID" value="BAF25082.1"/>
    <property type="molecule type" value="Genomic_DNA"/>
</dbReference>
<dbReference type="EMBL" id="AP014965">
    <property type="protein sequence ID" value="BAT08069.1"/>
    <property type="molecule type" value="Genomic_DNA"/>
</dbReference>
<dbReference type="EMBL" id="CM000146">
    <property type="protein sequence ID" value="EAZ44723.1"/>
    <property type="molecule type" value="Genomic_DNA"/>
</dbReference>
<dbReference type="EMBL" id="AK058840">
    <property type="protein sequence ID" value="BAG86811.1"/>
    <property type="molecule type" value="mRNA"/>
</dbReference>
<dbReference type="RefSeq" id="XP_015611485.1">
    <property type="nucleotide sequence ID" value="XM_015755999.1"/>
</dbReference>
<dbReference type="FunCoup" id="Q6ER22">
    <property type="interactions" value="1"/>
</dbReference>
<dbReference type="STRING" id="39947.Q6ER22"/>
<dbReference type="PaxDb" id="39947-Q6ER22"/>
<dbReference type="EnsemblPlants" id="Os09t0414500-01">
    <property type="protein sequence ID" value="Os09t0414500-01"/>
    <property type="gene ID" value="Os09g0414500"/>
</dbReference>
<dbReference type="Gramene" id="Os09t0414500-01">
    <property type="protein sequence ID" value="Os09t0414500-01"/>
    <property type="gene ID" value="Os09g0414500"/>
</dbReference>
<dbReference type="KEGG" id="dosa:Os09g0414500"/>
<dbReference type="eggNOG" id="ENOG502S2AW">
    <property type="taxonomic scope" value="Eukaryota"/>
</dbReference>
<dbReference type="HOGENOM" id="CLU_123565_1_1_1"/>
<dbReference type="InParanoid" id="Q6ER22"/>
<dbReference type="OMA" id="YEFAWDY"/>
<dbReference type="OrthoDB" id="682018at2759"/>
<dbReference type="Proteomes" id="UP000000763">
    <property type="component" value="Chromosome 9"/>
</dbReference>
<dbReference type="Proteomes" id="UP000007752">
    <property type="component" value="Chromosome 9"/>
</dbReference>
<dbReference type="Proteomes" id="UP000059680">
    <property type="component" value="Chromosome 9"/>
</dbReference>
<dbReference type="GO" id="GO:0005737">
    <property type="term" value="C:cytoplasm"/>
    <property type="evidence" value="ECO:0007669"/>
    <property type="project" value="UniProtKB-SubCell"/>
</dbReference>
<dbReference type="GO" id="GO:0005634">
    <property type="term" value="C:nucleus"/>
    <property type="evidence" value="ECO:0000318"/>
    <property type="project" value="GO_Central"/>
</dbReference>
<dbReference type="GO" id="GO:0003700">
    <property type="term" value="F:DNA-binding transcription factor activity"/>
    <property type="evidence" value="ECO:0000318"/>
    <property type="project" value="GO_Central"/>
</dbReference>
<dbReference type="GO" id="GO:0000976">
    <property type="term" value="F:transcription cis-regulatory region binding"/>
    <property type="evidence" value="ECO:0000318"/>
    <property type="project" value="GO_Central"/>
</dbReference>
<dbReference type="GO" id="GO:0008270">
    <property type="term" value="F:zinc ion binding"/>
    <property type="evidence" value="ECO:0007669"/>
    <property type="project" value="UniProtKB-KW"/>
</dbReference>
<dbReference type="GO" id="GO:0006355">
    <property type="term" value="P:regulation of DNA-templated transcription"/>
    <property type="evidence" value="ECO:0000318"/>
    <property type="project" value="GO_Central"/>
</dbReference>
<dbReference type="InterPro" id="IPR006456">
    <property type="entry name" value="ZF_HD_homeobox_Cys/His_dimer"/>
</dbReference>
<dbReference type="NCBIfam" id="TIGR01566">
    <property type="entry name" value="ZF_HD_prot_N"/>
    <property type="match status" value="1"/>
</dbReference>
<dbReference type="PANTHER" id="PTHR31948:SF169">
    <property type="entry name" value="MINI ZINC FINGER PROTEIN 2"/>
    <property type="match status" value="1"/>
</dbReference>
<dbReference type="PANTHER" id="PTHR31948">
    <property type="entry name" value="ZINC-FINGER HOMEODOMAIN PROTEIN 2"/>
    <property type="match status" value="1"/>
</dbReference>
<dbReference type="Pfam" id="PF04770">
    <property type="entry name" value="ZF-HD_dimer"/>
    <property type="match status" value="1"/>
</dbReference>
<dbReference type="PROSITE" id="PS51523">
    <property type="entry name" value="ZF_HD_DIMER"/>
    <property type="match status" value="1"/>
</dbReference>
<accession>Q6ER22</accession>
<accession>A0A0P0XMH5</accession>
<accession>A3BYT4</accession>
<evidence type="ECO:0000250" key="1"/>
<evidence type="ECO:0000255" key="2">
    <source>
        <dbReference type="PROSITE-ProRule" id="PRU00856"/>
    </source>
</evidence>
<evidence type="ECO:0000256" key="3">
    <source>
        <dbReference type="SAM" id="MobiDB-lite"/>
    </source>
</evidence>
<evidence type="ECO:0000305" key="4"/>
<organism>
    <name type="scientific">Oryza sativa subsp. japonica</name>
    <name type="common">Rice</name>
    <dbReference type="NCBI Taxonomy" id="39947"/>
    <lineage>
        <taxon>Eukaryota</taxon>
        <taxon>Viridiplantae</taxon>
        <taxon>Streptophyta</taxon>
        <taxon>Embryophyta</taxon>
        <taxon>Tracheophyta</taxon>
        <taxon>Spermatophyta</taxon>
        <taxon>Magnoliopsida</taxon>
        <taxon>Liliopsida</taxon>
        <taxon>Poales</taxon>
        <taxon>Poaceae</taxon>
        <taxon>BOP clade</taxon>
        <taxon>Oryzoideae</taxon>
        <taxon>Oryzeae</taxon>
        <taxon>Oryzinae</taxon>
        <taxon>Oryza</taxon>
        <taxon>Oryza sativa</taxon>
    </lineage>
</organism>
<name>MIF3_ORYSJ</name>
<reference key="1">
    <citation type="journal article" date="2005" name="Nature">
        <title>The map-based sequence of the rice genome.</title>
        <authorList>
            <consortium name="International rice genome sequencing project (IRGSP)"/>
        </authorList>
    </citation>
    <scope>NUCLEOTIDE SEQUENCE [LARGE SCALE GENOMIC DNA]</scope>
    <source>
        <strain>cv. Nipponbare</strain>
    </source>
</reference>
<reference key="2">
    <citation type="journal article" date="2008" name="Nucleic Acids Res.">
        <title>The rice annotation project database (RAP-DB): 2008 update.</title>
        <authorList>
            <consortium name="The rice annotation project (RAP)"/>
        </authorList>
    </citation>
    <scope>GENOME REANNOTATION</scope>
    <source>
        <strain>cv. Nipponbare</strain>
    </source>
</reference>
<reference key="3">
    <citation type="journal article" date="2013" name="Rice">
        <title>Improvement of the Oryza sativa Nipponbare reference genome using next generation sequence and optical map data.</title>
        <authorList>
            <person name="Kawahara Y."/>
            <person name="de la Bastide M."/>
            <person name="Hamilton J.P."/>
            <person name="Kanamori H."/>
            <person name="McCombie W.R."/>
            <person name="Ouyang S."/>
            <person name="Schwartz D.C."/>
            <person name="Tanaka T."/>
            <person name="Wu J."/>
            <person name="Zhou S."/>
            <person name="Childs K.L."/>
            <person name="Davidson R.M."/>
            <person name="Lin H."/>
            <person name="Quesada-Ocampo L."/>
            <person name="Vaillancourt B."/>
            <person name="Sakai H."/>
            <person name="Lee S.S."/>
            <person name="Kim J."/>
            <person name="Numa H."/>
            <person name="Itoh T."/>
            <person name="Buell C.R."/>
            <person name="Matsumoto T."/>
        </authorList>
    </citation>
    <scope>GENOME REANNOTATION</scope>
    <source>
        <strain>cv. Nipponbare</strain>
    </source>
</reference>
<reference key="4">
    <citation type="journal article" date="2005" name="PLoS Biol.">
        <title>The genomes of Oryza sativa: a history of duplications.</title>
        <authorList>
            <person name="Yu J."/>
            <person name="Wang J."/>
            <person name="Lin W."/>
            <person name="Li S."/>
            <person name="Li H."/>
            <person name="Zhou J."/>
            <person name="Ni P."/>
            <person name="Dong W."/>
            <person name="Hu S."/>
            <person name="Zeng C."/>
            <person name="Zhang J."/>
            <person name="Zhang Y."/>
            <person name="Li R."/>
            <person name="Xu Z."/>
            <person name="Li S."/>
            <person name="Li X."/>
            <person name="Zheng H."/>
            <person name="Cong L."/>
            <person name="Lin L."/>
            <person name="Yin J."/>
            <person name="Geng J."/>
            <person name="Li G."/>
            <person name="Shi J."/>
            <person name="Liu J."/>
            <person name="Lv H."/>
            <person name="Li J."/>
            <person name="Wang J."/>
            <person name="Deng Y."/>
            <person name="Ran L."/>
            <person name="Shi X."/>
            <person name="Wang X."/>
            <person name="Wu Q."/>
            <person name="Li C."/>
            <person name="Ren X."/>
            <person name="Wang J."/>
            <person name="Wang X."/>
            <person name="Li D."/>
            <person name="Liu D."/>
            <person name="Zhang X."/>
            <person name="Ji Z."/>
            <person name="Zhao W."/>
            <person name="Sun Y."/>
            <person name="Zhang Z."/>
            <person name="Bao J."/>
            <person name="Han Y."/>
            <person name="Dong L."/>
            <person name="Ji J."/>
            <person name="Chen P."/>
            <person name="Wu S."/>
            <person name="Liu J."/>
            <person name="Xiao Y."/>
            <person name="Bu D."/>
            <person name="Tan J."/>
            <person name="Yang L."/>
            <person name="Ye C."/>
            <person name="Zhang J."/>
            <person name="Xu J."/>
            <person name="Zhou Y."/>
            <person name="Yu Y."/>
            <person name="Zhang B."/>
            <person name="Zhuang S."/>
            <person name="Wei H."/>
            <person name="Liu B."/>
            <person name="Lei M."/>
            <person name="Yu H."/>
            <person name="Li Y."/>
            <person name="Xu H."/>
            <person name="Wei S."/>
            <person name="He X."/>
            <person name="Fang L."/>
            <person name="Zhang Z."/>
            <person name="Zhang Y."/>
            <person name="Huang X."/>
            <person name="Su Z."/>
            <person name="Tong W."/>
            <person name="Li J."/>
            <person name="Tong Z."/>
            <person name="Li S."/>
            <person name="Ye J."/>
            <person name="Wang L."/>
            <person name="Fang L."/>
            <person name="Lei T."/>
            <person name="Chen C.-S."/>
            <person name="Chen H.-C."/>
            <person name="Xu Z."/>
            <person name="Li H."/>
            <person name="Huang H."/>
            <person name="Zhang F."/>
            <person name="Xu H."/>
            <person name="Li N."/>
            <person name="Zhao C."/>
            <person name="Li S."/>
            <person name="Dong L."/>
            <person name="Huang Y."/>
            <person name="Li L."/>
            <person name="Xi Y."/>
            <person name="Qi Q."/>
            <person name="Li W."/>
            <person name="Zhang B."/>
            <person name="Hu W."/>
            <person name="Zhang Y."/>
            <person name="Tian X."/>
            <person name="Jiao Y."/>
            <person name="Liang X."/>
            <person name="Jin J."/>
            <person name="Gao L."/>
            <person name="Zheng W."/>
            <person name="Hao B."/>
            <person name="Liu S.-M."/>
            <person name="Wang W."/>
            <person name="Yuan L."/>
            <person name="Cao M."/>
            <person name="McDermott J."/>
            <person name="Samudrala R."/>
            <person name="Wang J."/>
            <person name="Wong G.K.-S."/>
            <person name="Yang H."/>
        </authorList>
    </citation>
    <scope>NUCLEOTIDE SEQUENCE [LARGE SCALE GENOMIC DNA]</scope>
    <source>
        <strain>cv. Nipponbare</strain>
    </source>
</reference>
<reference key="5">
    <citation type="journal article" date="2003" name="Science">
        <title>Collection, mapping, and annotation of over 28,000 cDNA clones from japonica rice.</title>
        <authorList>
            <consortium name="The rice full-length cDNA consortium"/>
        </authorList>
    </citation>
    <scope>NUCLEOTIDE SEQUENCE [LARGE SCALE MRNA]</scope>
    <source>
        <strain>cv. Nipponbare</strain>
    </source>
</reference>
<reference key="6">
    <citation type="journal article" date="2008" name="J. Integr. Plant Biol.">
        <title>Phylogenetic analysis of the plant-specific zinc finger-homeobox and mini zinc finger gene families.</title>
        <authorList>
            <person name="Hu W."/>
            <person name="dePamphilis C.W."/>
            <person name="Ma H."/>
        </authorList>
    </citation>
    <scope>GENE FAMILY</scope>
    <scope>NOMENCLATURE</scope>
</reference>